<feature type="chain" id="PRO_0000125636" description="Large ribosomal subunit protein uL1">
    <location>
        <begin position="1"/>
        <end position="235"/>
    </location>
</feature>
<name>RL1_BLOFL</name>
<gene>
    <name evidence="1" type="primary">rplA</name>
    <name type="ordered locus">Bfl560</name>
</gene>
<reference key="1">
    <citation type="journal article" date="2003" name="Proc. Natl. Acad. Sci. U.S.A.">
        <title>The genome sequence of Blochmannia floridanus: comparative analysis of reduced genomes.</title>
        <authorList>
            <person name="Gil R."/>
            <person name="Silva F.J."/>
            <person name="Zientz E."/>
            <person name="Delmotte F."/>
            <person name="Gonzalez-Candelas F."/>
            <person name="Latorre A."/>
            <person name="Rausell C."/>
            <person name="Kamerbeek J."/>
            <person name="Gadau J."/>
            <person name="Hoelldobler B."/>
            <person name="van Ham R.C.H.J."/>
            <person name="Gross R."/>
            <person name="Moya A."/>
        </authorList>
    </citation>
    <scope>NUCLEOTIDE SEQUENCE [LARGE SCALE GENOMIC DNA]</scope>
</reference>
<accession>Q7VRP4</accession>
<protein>
    <recommendedName>
        <fullName evidence="1">Large ribosomal subunit protein uL1</fullName>
    </recommendedName>
    <alternativeName>
        <fullName evidence="2">50S ribosomal protein L1</fullName>
    </alternativeName>
</protein>
<keyword id="KW-1185">Reference proteome</keyword>
<keyword id="KW-0678">Repressor</keyword>
<keyword id="KW-0687">Ribonucleoprotein</keyword>
<keyword id="KW-0689">Ribosomal protein</keyword>
<keyword id="KW-0694">RNA-binding</keyword>
<keyword id="KW-0699">rRNA-binding</keyword>
<keyword id="KW-0810">Translation regulation</keyword>
<keyword id="KW-0820">tRNA-binding</keyword>
<dbReference type="EMBL" id="BX248583">
    <property type="protein sequence ID" value="CAD83242.1"/>
    <property type="molecule type" value="Genomic_DNA"/>
</dbReference>
<dbReference type="SMR" id="Q7VRP4"/>
<dbReference type="STRING" id="203907.Bfl560"/>
<dbReference type="KEGG" id="bfl:Bfl560"/>
<dbReference type="eggNOG" id="COG0081">
    <property type="taxonomic scope" value="Bacteria"/>
</dbReference>
<dbReference type="HOGENOM" id="CLU_062853_0_0_6"/>
<dbReference type="OrthoDB" id="9803740at2"/>
<dbReference type="Proteomes" id="UP000002192">
    <property type="component" value="Chromosome"/>
</dbReference>
<dbReference type="GO" id="GO:0022625">
    <property type="term" value="C:cytosolic large ribosomal subunit"/>
    <property type="evidence" value="ECO:0007669"/>
    <property type="project" value="TreeGrafter"/>
</dbReference>
<dbReference type="GO" id="GO:0019843">
    <property type="term" value="F:rRNA binding"/>
    <property type="evidence" value="ECO:0007669"/>
    <property type="project" value="UniProtKB-UniRule"/>
</dbReference>
<dbReference type="GO" id="GO:0003735">
    <property type="term" value="F:structural constituent of ribosome"/>
    <property type="evidence" value="ECO:0007669"/>
    <property type="project" value="InterPro"/>
</dbReference>
<dbReference type="GO" id="GO:0000049">
    <property type="term" value="F:tRNA binding"/>
    <property type="evidence" value="ECO:0007669"/>
    <property type="project" value="UniProtKB-KW"/>
</dbReference>
<dbReference type="GO" id="GO:0006417">
    <property type="term" value="P:regulation of translation"/>
    <property type="evidence" value="ECO:0007669"/>
    <property type="project" value="UniProtKB-KW"/>
</dbReference>
<dbReference type="GO" id="GO:0006412">
    <property type="term" value="P:translation"/>
    <property type="evidence" value="ECO:0007669"/>
    <property type="project" value="UniProtKB-UniRule"/>
</dbReference>
<dbReference type="CDD" id="cd00403">
    <property type="entry name" value="Ribosomal_L1"/>
    <property type="match status" value="1"/>
</dbReference>
<dbReference type="FunFam" id="3.40.50.790:FF:000001">
    <property type="entry name" value="50S ribosomal protein L1"/>
    <property type="match status" value="1"/>
</dbReference>
<dbReference type="Gene3D" id="3.30.190.20">
    <property type="match status" value="1"/>
</dbReference>
<dbReference type="Gene3D" id="3.40.50.790">
    <property type="match status" value="1"/>
</dbReference>
<dbReference type="HAMAP" id="MF_01318_B">
    <property type="entry name" value="Ribosomal_uL1_B"/>
    <property type="match status" value="1"/>
</dbReference>
<dbReference type="InterPro" id="IPR005878">
    <property type="entry name" value="Ribosom_uL1_bac-type"/>
</dbReference>
<dbReference type="InterPro" id="IPR002143">
    <property type="entry name" value="Ribosomal_uL1"/>
</dbReference>
<dbReference type="InterPro" id="IPR023674">
    <property type="entry name" value="Ribosomal_uL1-like"/>
</dbReference>
<dbReference type="InterPro" id="IPR028364">
    <property type="entry name" value="Ribosomal_uL1/biogenesis"/>
</dbReference>
<dbReference type="InterPro" id="IPR016095">
    <property type="entry name" value="Ribosomal_uL1_3-a/b-sand"/>
</dbReference>
<dbReference type="InterPro" id="IPR023673">
    <property type="entry name" value="Ribosomal_uL1_CS"/>
</dbReference>
<dbReference type="NCBIfam" id="TIGR01169">
    <property type="entry name" value="rplA_bact"/>
    <property type="match status" value="1"/>
</dbReference>
<dbReference type="PANTHER" id="PTHR36427">
    <property type="entry name" value="54S RIBOSOMAL PROTEIN L1, MITOCHONDRIAL"/>
    <property type="match status" value="1"/>
</dbReference>
<dbReference type="PANTHER" id="PTHR36427:SF3">
    <property type="entry name" value="LARGE RIBOSOMAL SUBUNIT PROTEIN UL1M"/>
    <property type="match status" value="1"/>
</dbReference>
<dbReference type="Pfam" id="PF00687">
    <property type="entry name" value="Ribosomal_L1"/>
    <property type="match status" value="1"/>
</dbReference>
<dbReference type="PIRSF" id="PIRSF002155">
    <property type="entry name" value="Ribosomal_L1"/>
    <property type="match status" value="1"/>
</dbReference>
<dbReference type="SUPFAM" id="SSF56808">
    <property type="entry name" value="Ribosomal protein L1"/>
    <property type="match status" value="1"/>
</dbReference>
<dbReference type="PROSITE" id="PS01199">
    <property type="entry name" value="RIBOSOMAL_L1"/>
    <property type="match status" value="1"/>
</dbReference>
<proteinExistence type="inferred from homology"/>
<sequence length="235" mass="26129">MNRLSKRKKILNCIDKSVQYNIADGLRILQETARVKFVENVDVAVNLGINPRRSDQNVRNSVVMPHGLGKKIRIAVFTQGESNVVLARRAGADFAGLEDLCQLIKTKGCTGFDVFIASPDVMNIVSQLGPILGPKGLMPNPKMSTVTQNLTDTIRNFKLGQVRYKNDKNGIIHAVIGKINFNISCLQENLEALVFSIYQVKPTQFKGIYIKKIYISTTMGRSILIDKSSLNVLIH</sequence>
<evidence type="ECO:0000255" key="1">
    <source>
        <dbReference type="HAMAP-Rule" id="MF_01318"/>
    </source>
</evidence>
<evidence type="ECO:0000305" key="2"/>
<organism>
    <name type="scientific">Blochmanniella floridana</name>
    <dbReference type="NCBI Taxonomy" id="203907"/>
    <lineage>
        <taxon>Bacteria</taxon>
        <taxon>Pseudomonadati</taxon>
        <taxon>Pseudomonadota</taxon>
        <taxon>Gammaproteobacteria</taxon>
        <taxon>Enterobacterales</taxon>
        <taxon>Enterobacteriaceae</taxon>
        <taxon>ant endosymbionts</taxon>
        <taxon>Candidatus Blochmanniella</taxon>
    </lineage>
</organism>
<comment type="function">
    <text evidence="1">Binds directly to 23S rRNA. The L1 stalk is quite mobile in the ribosome, and is involved in E site tRNA release.</text>
</comment>
<comment type="function">
    <text evidence="1">Protein L1 is also a translational repressor protein, it controls the translation of the L11 operon by binding to its mRNA.</text>
</comment>
<comment type="subunit">
    <text evidence="1">Part of the 50S ribosomal subunit.</text>
</comment>
<comment type="similarity">
    <text evidence="1">Belongs to the universal ribosomal protein uL1 family.</text>
</comment>